<evidence type="ECO:0000250" key="1">
    <source>
        <dbReference type="UniProtKB" id="I6L8L6"/>
    </source>
</evidence>
<evidence type="ECO:0000250" key="2">
    <source>
        <dbReference type="UniProtKB" id="P24605"/>
    </source>
</evidence>
<evidence type="ECO:0000250" key="3">
    <source>
        <dbReference type="UniProtKB" id="Q90249"/>
    </source>
</evidence>
<evidence type="ECO:0000269" key="4">
    <source>
    </source>
</evidence>
<evidence type="ECO:0000305" key="5"/>
<evidence type="ECO:0000305" key="6">
    <source>
    </source>
</evidence>
<reference key="1">
    <citation type="journal article" date="1991" name="Biochim. Biophys. Acta">
        <title>The amino acid sequence and properties of an edema-inducing Lys-49 phospholipase A2 homolog from the venom of Trimeresurus mucrosquamatus.</title>
        <authorList>
            <person name="Liu C.-S."/>
            <person name="Chen J.-M."/>
            <person name="Chang C.-H."/>
            <person name="Chen S.-W."/>
            <person name="Teng C.-M."/>
            <person name="Tsai I.-H."/>
        </authorList>
    </citation>
    <scope>PROTEIN SEQUENCE</scope>
    <scope>FUNCTION</scope>
    <scope>SUBCELLULAR LOCATION</scope>
    <source>
        <tissue>Venom</tissue>
    </source>
</reference>
<sequence>SLIELGKMIFQETGKNPVKNYGLYLCNCGVGNRGKPVDATDRCCFVHKCCYKKVTGCDPKKDRYSYSWENKAIVCGEKNPPCLKQVCECDKAVAICLRENLQTYDKKHRVTVKFLCKAPESC</sequence>
<organism>
    <name type="scientific">Protobothrops mucrosquamatus</name>
    <name type="common">Taiwan habu</name>
    <name type="synonym">Trimeresurus mucrosquamatus</name>
    <dbReference type="NCBI Taxonomy" id="103944"/>
    <lineage>
        <taxon>Eukaryota</taxon>
        <taxon>Metazoa</taxon>
        <taxon>Chordata</taxon>
        <taxon>Craniata</taxon>
        <taxon>Vertebrata</taxon>
        <taxon>Euteleostomi</taxon>
        <taxon>Lepidosauria</taxon>
        <taxon>Squamata</taxon>
        <taxon>Bifurcata</taxon>
        <taxon>Unidentata</taxon>
        <taxon>Episquamata</taxon>
        <taxon>Toxicofera</taxon>
        <taxon>Serpentes</taxon>
        <taxon>Colubroidea</taxon>
        <taxon>Viperidae</taxon>
        <taxon>Crotalinae</taxon>
        <taxon>Protobothrops</taxon>
    </lineage>
</organism>
<proteinExistence type="evidence at protein level"/>
<accession>P22640</accession>
<comment type="function">
    <text evidence="1 4">Snake venom phospholipase A2 (PLA2) that has almost no phospholipase A2 activity. Is myotoxic (By similarity). Displays edema-inducing activities (PubMed:2029535). A model of myotoxic mechanism has been proposed: an apo Lys49-PLA2 is activated by the entrance of a hydrophobic molecule (e.g. fatty acid) at the hydrophobic channel of the protein leading to a reorientation of a monomer (By similarity). This reorientation causes a transition between 'inactive' to 'active' states, causing alignment of C-terminal and membrane-docking sites (MDoS) side-by-side and putting the membrane-disruption sites (MDiS) in the same plane, exposed to solvent and in a symmetric position for both monomers (By similarity). The MDoS region stabilizes the toxin on membrane by the interaction of charged residues with phospholipid head groups (By similarity). Subsequently, the MDiS region destabilizes the membrane with penetration of hydrophobic residues (By similarity). This insertion causes a disorganization of the membrane, allowing an uncontrolled influx of ions (i.e. calcium and sodium), and eventually triggering irreversible intracellular alterations and cell death (By similarity).</text>
</comment>
<comment type="subunit">
    <text evidence="1">Homodimer; non-covalently linked.</text>
</comment>
<comment type="subcellular location">
    <subcellularLocation>
        <location evidence="4">Secreted</location>
    </subcellularLocation>
</comment>
<comment type="tissue specificity">
    <text evidence="6">Expressed by the venom gland.</text>
</comment>
<comment type="similarity">
    <text evidence="5">Belongs to the phospholipase A2 family. Group II subfamily. K49 sub-subfamily.</text>
</comment>
<comment type="caution">
    <text evidence="5">Does not bind calcium as one of the calcium-binding sites is lost (Asp-&gt;Lys in position 48, which corresponds to 'Lys-49' in the current nomenclature).</text>
</comment>
<feature type="chain" id="PRO_0000161706" description="Basic phospholipase A2 homolog" evidence="4">
    <location>
        <begin position="1"/>
        <end position="122"/>
    </location>
</feature>
<feature type="region of interest" description="Important for membrane-damaging activities in eukaryotes and bacteria; heparin-binding" evidence="2">
    <location>
        <begin position="106"/>
        <end position="117"/>
    </location>
</feature>
<feature type="site" description="Important residue of the cationic membrane-docking site (MDoS)" evidence="1">
    <location>
        <position position="106"/>
    </location>
</feature>
<feature type="site" description="Important residue of the cationic membrane-docking site (MDoS)" evidence="1">
    <location>
        <position position="109"/>
    </location>
</feature>
<feature type="site" description="Cationic membrane-docking site (MDoS)" evidence="1">
    <location>
        <position position="112"/>
    </location>
</feature>
<feature type="site" description="Cationic membrane-docking site (MDoS)" evidence="1">
    <location>
        <position position="113"/>
    </location>
</feature>
<feature type="site" description="Hydrophobic membrane-disruption site (MDiS)" evidence="1">
    <location>
        <position position="115"/>
    </location>
</feature>
<feature type="disulfide bond" evidence="3">
    <location>
        <begin position="26"/>
        <end position="116"/>
    </location>
</feature>
<feature type="disulfide bond" evidence="3">
    <location>
        <begin position="28"/>
        <end position="44"/>
    </location>
</feature>
<feature type="disulfide bond" evidence="3">
    <location>
        <begin position="43"/>
        <end position="96"/>
    </location>
</feature>
<feature type="disulfide bond" evidence="3">
    <location>
        <begin position="49"/>
        <end position="122"/>
    </location>
</feature>
<feature type="disulfide bond" evidence="3">
    <location>
        <begin position="50"/>
        <end position="89"/>
    </location>
</feature>
<feature type="disulfide bond" evidence="3">
    <location>
        <begin position="57"/>
        <end position="82"/>
    </location>
</feature>
<feature type="disulfide bond" evidence="3">
    <location>
        <begin position="75"/>
        <end position="87"/>
    </location>
</feature>
<dbReference type="PIR" id="S15133">
    <property type="entry name" value="S15133"/>
</dbReference>
<dbReference type="SMR" id="P22640"/>
<dbReference type="GO" id="GO:0005576">
    <property type="term" value="C:extracellular region"/>
    <property type="evidence" value="ECO:0007669"/>
    <property type="project" value="UniProtKB-SubCell"/>
</dbReference>
<dbReference type="GO" id="GO:0005509">
    <property type="term" value="F:calcium ion binding"/>
    <property type="evidence" value="ECO:0007669"/>
    <property type="project" value="InterPro"/>
</dbReference>
<dbReference type="GO" id="GO:0047498">
    <property type="term" value="F:calcium-dependent phospholipase A2 activity"/>
    <property type="evidence" value="ECO:0007669"/>
    <property type="project" value="TreeGrafter"/>
</dbReference>
<dbReference type="GO" id="GO:0005543">
    <property type="term" value="F:phospholipid binding"/>
    <property type="evidence" value="ECO:0007669"/>
    <property type="project" value="TreeGrafter"/>
</dbReference>
<dbReference type="GO" id="GO:0090729">
    <property type="term" value="F:toxin activity"/>
    <property type="evidence" value="ECO:0007669"/>
    <property type="project" value="UniProtKB-KW"/>
</dbReference>
<dbReference type="GO" id="GO:0050482">
    <property type="term" value="P:arachidonate secretion"/>
    <property type="evidence" value="ECO:0007669"/>
    <property type="project" value="InterPro"/>
</dbReference>
<dbReference type="GO" id="GO:0016042">
    <property type="term" value="P:lipid catabolic process"/>
    <property type="evidence" value="ECO:0007669"/>
    <property type="project" value="InterPro"/>
</dbReference>
<dbReference type="GO" id="GO:0006644">
    <property type="term" value="P:phospholipid metabolic process"/>
    <property type="evidence" value="ECO:0007669"/>
    <property type="project" value="InterPro"/>
</dbReference>
<dbReference type="CDD" id="cd00125">
    <property type="entry name" value="PLA2c"/>
    <property type="match status" value="1"/>
</dbReference>
<dbReference type="FunFam" id="1.20.90.10:FF:000001">
    <property type="entry name" value="Basic phospholipase A2 homolog"/>
    <property type="match status" value="1"/>
</dbReference>
<dbReference type="Gene3D" id="1.20.90.10">
    <property type="entry name" value="Phospholipase A2 domain"/>
    <property type="match status" value="1"/>
</dbReference>
<dbReference type="InterPro" id="IPR001211">
    <property type="entry name" value="PLipase_A2"/>
</dbReference>
<dbReference type="InterPro" id="IPR033112">
    <property type="entry name" value="PLipase_A2_Asp_AS"/>
</dbReference>
<dbReference type="InterPro" id="IPR016090">
    <property type="entry name" value="PLipase_A2_dom"/>
</dbReference>
<dbReference type="InterPro" id="IPR036444">
    <property type="entry name" value="PLipase_A2_dom_sf"/>
</dbReference>
<dbReference type="InterPro" id="IPR033113">
    <property type="entry name" value="PLipase_A2_His_AS"/>
</dbReference>
<dbReference type="PANTHER" id="PTHR11716:SF101">
    <property type="entry name" value="BASIC PHOSPHOLIPASE A2 PA-11-LIKE"/>
    <property type="match status" value="1"/>
</dbReference>
<dbReference type="PANTHER" id="PTHR11716">
    <property type="entry name" value="PHOSPHOLIPASE A2 FAMILY MEMBER"/>
    <property type="match status" value="1"/>
</dbReference>
<dbReference type="Pfam" id="PF00068">
    <property type="entry name" value="Phospholip_A2_1"/>
    <property type="match status" value="1"/>
</dbReference>
<dbReference type="PRINTS" id="PR00389">
    <property type="entry name" value="PHPHLIPASEA2"/>
</dbReference>
<dbReference type="SMART" id="SM00085">
    <property type="entry name" value="PA2c"/>
    <property type="match status" value="1"/>
</dbReference>
<dbReference type="SUPFAM" id="SSF48619">
    <property type="entry name" value="Phospholipase A2, PLA2"/>
    <property type="match status" value="1"/>
</dbReference>
<dbReference type="PROSITE" id="PS00119">
    <property type="entry name" value="PA2_ASP"/>
    <property type="match status" value="1"/>
</dbReference>
<dbReference type="PROSITE" id="PS00118">
    <property type="entry name" value="PA2_HIS"/>
    <property type="match status" value="1"/>
</dbReference>
<protein>
    <recommendedName>
        <fullName>Basic phospholipase A2 homolog</fullName>
        <shortName>svPLA2 homolog</shortName>
    </recommendedName>
    <alternativeName>
        <fullName>TMV-K49</fullName>
    </alternativeName>
</protein>
<keyword id="KW-0903">Direct protein sequencing</keyword>
<keyword id="KW-1015">Disulfide bond</keyword>
<keyword id="KW-0959">Myotoxin</keyword>
<keyword id="KW-0964">Secreted</keyword>
<keyword id="KW-0800">Toxin</keyword>
<name>PA2H_PROMU</name>